<comment type="function">
    <text evidence="1">Could be a nuclease involved in processing of the 5'-end of pre-16S rRNA.</text>
</comment>
<comment type="subcellular location">
    <subcellularLocation>
        <location evidence="1">Cytoplasm</location>
    </subcellularLocation>
</comment>
<comment type="similarity">
    <text evidence="1">Belongs to the YqgF nuclease family.</text>
</comment>
<gene>
    <name type="ordered locus">BCG9842_B0730</name>
</gene>
<accession>B7IYP0</accession>
<proteinExistence type="inferred from homology"/>
<sequence length="137" mass="15322">MRILGLDVGTKTVGVAMSDEMGWTAQGLETIKINEERGHFGFDRISELVKQYNVDKIVVGLPKNMNGTIGPRGEACQQFAENLRELLQLDVVMWDERLSTMAAERLLISADVSRKKRKQVIDKMAAVVILQGFLDSK</sequence>
<keyword id="KW-0963">Cytoplasm</keyword>
<keyword id="KW-0378">Hydrolase</keyword>
<keyword id="KW-0540">Nuclease</keyword>
<keyword id="KW-0690">Ribosome biogenesis</keyword>
<evidence type="ECO:0000255" key="1">
    <source>
        <dbReference type="HAMAP-Rule" id="MF_00651"/>
    </source>
</evidence>
<dbReference type="EC" id="3.1.-.-" evidence="1"/>
<dbReference type="EMBL" id="CP001186">
    <property type="protein sequence ID" value="ACK93723.1"/>
    <property type="molecule type" value="Genomic_DNA"/>
</dbReference>
<dbReference type="SMR" id="B7IYP0"/>
<dbReference type="KEGG" id="bcg:BCG9842_B0730"/>
<dbReference type="HOGENOM" id="CLU_098240_2_0_9"/>
<dbReference type="Proteomes" id="UP000006744">
    <property type="component" value="Chromosome"/>
</dbReference>
<dbReference type="GO" id="GO:0005829">
    <property type="term" value="C:cytosol"/>
    <property type="evidence" value="ECO:0007669"/>
    <property type="project" value="TreeGrafter"/>
</dbReference>
<dbReference type="GO" id="GO:0004518">
    <property type="term" value="F:nuclease activity"/>
    <property type="evidence" value="ECO:0007669"/>
    <property type="project" value="UniProtKB-KW"/>
</dbReference>
<dbReference type="GO" id="GO:0000967">
    <property type="term" value="P:rRNA 5'-end processing"/>
    <property type="evidence" value="ECO:0007669"/>
    <property type="project" value="UniProtKB-UniRule"/>
</dbReference>
<dbReference type="CDD" id="cd16964">
    <property type="entry name" value="YqgF"/>
    <property type="match status" value="1"/>
</dbReference>
<dbReference type="FunFam" id="3.30.420.140:FF:000003">
    <property type="entry name" value="Putative pre-16S rRNA nuclease"/>
    <property type="match status" value="1"/>
</dbReference>
<dbReference type="Gene3D" id="3.30.420.140">
    <property type="entry name" value="YqgF/RNase H-like domain"/>
    <property type="match status" value="1"/>
</dbReference>
<dbReference type="HAMAP" id="MF_00651">
    <property type="entry name" value="Nuclease_YqgF"/>
    <property type="match status" value="1"/>
</dbReference>
<dbReference type="InterPro" id="IPR012337">
    <property type="entry name" value="RNaseH-like_sf"/>
</dbReference>
<dbReference type="InterPro" id="IPR005227">
    <property type="entry name" value="YqgF"/>
</dbReference>
<dbReference type="InterPro" id="IPR006641">
    <property type="entry name" value="YqgF/RNaseH-like_dom"/>
</dbReference>
<dbReference type="InterPro" id="IPR037027">
    <property type="entry name" value="YqgF/RNaseH-like_dom_sf"/>
</dbReference>
<dbReference type="NCBIfam" id="TIGR00250">
    <property type="entry name" value="RNAse_H_YqgF"/>
    <property type="match status" value="1"/>
</dbReference>
<dbReference type="PANTHER" id="PTHR33317">
    <property type="entry name" value="POLYNUCLEOTIDYL TRANSFERASE, RIBONUCLEASE H-LIKE SUPERFAMILY PROTEIN"/>
    <property type="match status" value="1"/>
</dbReference>
<dbReference type="PANTHER" id="PTHR33317:SF4">
    <property type="entry name" value="POLYNUCLEOTIDYL TRANSFERASE, RIBONUCLEASE H-LIKE SUPERFAMILY PROTEIN"/>
    <property type="match status" value="1"/>
</dbReference>
<dbReference type="Pfam" id="PF03652">
    <property type="entry name" value="RuvX"/>
    <property type="match status" value="1"/>
</dbReference>
<dbReference type="SMART" id="SM00732">
    <property type="entry name" value="YqgFc"/>
    <property type="match status" value="1"/>
</dbReference>
<dbReference type="SUPFAM" id="SSF53098">
    <property type="entry name" value="Ribonuclease H-like"/>
    <property type="match status" value="1"/>
</dbReference>
<feature type="chain" id="PRO_1000130996" description="Putative pre-16S rRNA nuclease">
    <location>
        <begin position="1"/>
        <end position="137"/>
    </location>
</feature>
<name>YQGF_BACC2</name>
<protein>
    <recommendedName>
        <fullName evidence="1">Putative pre-16S rRNA nuclease</fullName>
        <ecNumber evidence="1">3.1.-.-</ecNumber>
    </recommendedName>
</protein>
<organism>
    <name type="scientific">Bacillus cereus (strain G9842)</name>
    <dbReference type="NCBI Taxonomy" id="405531"/>
    <lineage>
        <taxon>Bacteria</taxon>
        <taxon>Bacillati</taxon>
        <taxon>Bacillota</taxon>
        <taxon>Bacilli</taxon>
        <taxon>Bacillales</taxon>
        <taxon>Bacillaceae</taxon>
        <taxon>Bacillus</taxon>
        <taxon>Bacillus cereus group</taxon>
    </lineage>
</organism>
<reference key="1">
    <citation type="submission" date="2008-10" db="EMBL/GenBank/DDBJ databases">
        <title>Genome sequence of Bacillus cereus G9842.</title>
        <authorList>
            <person name="Dodson R.J."/>
            <person name="Durkin A.S."/>
            <person name="Rosovitz M.J."/>
            <person name="Rasko D.A."/>
            <person name="Hoffmaster A."/>
            <person name="Ravel J."/>
            <person name="Sutton G."/>
        </authorList>
    </citation>
    <scope>NUCLEOTIDE SEQUENCE [LARGE SCALE GENOMIC DNA]</scope>
    <source>
        <strain>G9842</strain>
    </source>
</reference>